<protein>
    <recommendedName>
        <fullName evidence="1">2-oxoglutarate dehydrogenase E1 component</fullName>
        <ecNumber evidence="1">1.2.4.2</ecNumber>
    </recommendedName>
    <alternativeName>
        <fullName evidence="1">Alpha-ketoglutarate dehydrogenase</fullName>
    </alternativeName>
</protein>
<reference key="1">
    <citation type="journal article" date="2005" name="Proc. Natl. Acad. Sci. U.S.A.">
        <title>Whole genome sequence of Staphylococcus saprophyticus reveals the pathogenesis of uncomplicated urinary tract infection.</title>
        <authorList>
            <person name="Kuroda M."/>
            <person name="Yamashita A."/>
            <person name="Hirakawa H."/>
            <person name="Kumano M."/>
            <person name="Morikawa K."/>
            <person name="Higashide M."/>
            <person name="Maruyama A."/>
            <person name="Inose Y."/>
            <person name="Matoba K."/>
            <person name="Toh H."/>
            <person name="Kuhara S."/>
            <person name="Hattori M."/>
            <person name="Ohta T."/>
        </authorList>
    </citation>
    <scope>NUCLEOTIDE SEQUENCE [LARGE SCALE GENOMIC DNA]</scope>
    <source>
        <strain>ATCC 15305 / DSM 20229 / NCIMB 8711 / NCTC 7292 / S-41</strain>
    </source>
</reference>
<dbReference type="EC" id="1.2.4.2" evidence="1"/>
<dbReference type="EMBL" id="AP008934">
    <property type="protein sequence ID" value="BAE18470.1"/>
    <property type="molecule type" value="Genomic_DNA"/>
</dbReference>
<dbReference type="RefSeq" id="WP_011303106.1">
    <property type="nucleotide sequence ID" value="NZ_MTGA01000038.1"/>
</dbReference>
<dbReference type="SMR" id="Q49XM5"/>
<dbReference type="GeneID" id="3616663"/>
<dbReference type="KEGG" id="ssp:SSP1325"/>
<dbReference type="PATRIC" id="fig|342451.11.peg.1328"/>
<dbReference type="eggNOG" id="COG0567">
    <property type="taxonomic scope" value="Bacteria"/>
</dbReference>
<dbReference type="HOGENOM" id="CLU_004709_1_0_9"/>
<dbReference type="OrthoDB" id="9759785at2"/>
<dbReference type="Proteomes" id="UP000006371">
    <property type="component" value="Chromosome"/>
</dbReference>
<dbReference type="GO" id="GO:0005829">
    <property type="term" value="C:cytosol"/>
    <property type="evidence" value="ECO:0007669"/>
    <property type="project" value="TreeGrafter"/>
</dbReference>
<dbReference type="GO" id="GO:0045252">
    <property type="term" value="C:oxoglutarate dehydrogenase complex"/>
    <property type="evidence" value="ECO:0007669"/>
    <property type="project" value="TreeGrafter"/>
</dbReference>
<dbReference type="GO" id="GO:0004591">
    <property type="term" value="F:oxoglutarate dehydrogenase (succinyl-transferring) activity"/>
    <property type="evidence" value="ECO:0007669"/>
    <property type="project" value="UniProtKB-UniRule"/>
</dbReference>
<dbReference type="GO" id="GO:0030976">
    <property type="term" value="F:thiamine pyrophosphate binding"/>
    <property type="evidence" value="ECO:0007669"/>
    <property type="project" value="UniProtKB-UniRule"/>
</dbReference>
<dbReference type="GO" id="GO:0006096">
    <property type="term" value="P:glycolytic process"/>
    <property type="evidence" value="ECO:0007669"/>
    <property type="project" value="UniProtKB-UniRule"/>
</dbReference>
<dbReference type="GO" id="GO:0006099">
    <property type="term" value="P:tricarboxylic acid cycle"/>
    <property type="evidence" value="ECO:0007669"/>
    <property type="project" value="TreeGrafter"/>
</dbReference>
<dbReference type="CDD" id="cd02016">
    <property type="entry name" value="TPP_E1_OGDC_like"/>
    <property type="match status" value="1"/>
</dbReference>
<dbReference type="FunFam" id="3.40.50.970:FF:000036">
    <property type="entry name" value="2-oxoglutarate dehydrogenase E1 component"/>
    <property type="match status" value="1"/>
</dbReference>
<dbReference type="Gene3D" id="3.40.50.12470">
    <property type="match status" value="1"/>
</dbReference>
<dbReference type="Gene3D" id="3.40.50.970">
    <property type="match status" value="1"/>
</dbReference>
<dbReference type="Gene3D" id="3.40.50.11610">
    <property type="entry name" value="Multifunctional 2-oxoglutarate metabolism enzyme, C-terminal domain"/>
    <property type="match status" value="1"/>
</dbReference>
<dbReference type="Gene3D" id="1.10.287.1150">
    <property type="entry name" value="TPP helical domain"/>
    <property type="match status" value="1"/>
</dbReference>
<dbReference type="HAMAP" id="MF_01169">
    <property type="entry name" value="SucA_OdhA"/>
    <property type="match status" value="1"/>
</dbReference>
<dbReference type="InterPro" id="IPR011603">
    <property type="entry name" value="2oxoglutarate_DH_E1"/>
</dbReference>
<dbReference type="InterPro" id="IPR023784">
    <property type="entry name" value="2oxoglutarate_DH_E1_bac"/>
</dbReference>
<dbReference type="InterPro" id="IPR001017">
    <property type="entry name" value="DH_E1"/>
</dbReference>
<dbReference type="InterPro" id="IPR042179">
    <property type="entry name" value="KGD_C_sf"/>
</dbReference>
<dbReference type="InterPro" id="IPR031717">
    <property type="entry name" value="ODO-1/KGD_C"/>
</dbReference>
<dbReference type="InterPro" id="IPR029061">
    <property type="entry name" value="THDP-binding"/>
</dbReference>
<dbReference type="InterPro" id="IPR005475">
    <property type="entry name" value="Transketolase-like_Pyr-bd"/>
</dbReference>
<dbReference type="NCBIfam" id="TIGR00239">
    <property type="entry name" value="2oxo_dh_E1"/>
    <property type="match status" value="1"/>
</dbReference>
<dbReference type="NCBIfam" id="NF006914">
    <property type="entry name" value="PRK09404.1"/>
    <property type="match status" value="1"/>
</dbReference>
<dbReference type="NCBIfam" id="NF008907">
    <property type="entry name" value="PRK12270.1"/>
    <property type="match status" value="1"/>
</dbReference>
<dbReference type="PANTHER" id="PTHR23152:SF4">
    <property type="entry name" value="2-OXOADIPATE DEHYDROGENASE COMPLEX COMPONENT E1"/>
    <property type="match status" value="1"/>
</dbReference>
<dbReference type="PANTHER" id="PTHR23152">
    <property type="entry name" value="2-OXOGLUTARATE DEHYDROGENASE"/>
    <property type="match status" value="1"/>
</dbReference>
<dbReference type="Pfam" id="PF00676">
    <property type="entry name" value="E1_dh"/>
    <property type="match status" value="1"/>
</dbReference>
<dbReference type="Pfam" id="PF16870">
    <property type="entry name" value="OxoGdeHyase_C"/>
    <property type="match status" value="1"/>
</dbReference>
<dbReference type="Pfam" id="PF02779">
    <property type="entry name" value="Transket_pyr"/>
    <property type="match status" value="1"/>
</dbReference>
<dbReference type="PIRSF" id="PIRSF000157">
    <property type="entry name" value="Oxoglu_dh_E1"/>
    <property type="match status" value="1"/>
</dbReference>
<dbReference type="SMART" id="SM00861">
    <property type="entry name" value="Transket_pyr"/>
    <property type="match status" value="1"/>
</dbReference>
<dbReference type="SUPFAM" id="SSF52518">
    <property type="entry name" value="Thiamin diphosphate-binding fold (THDP-binding)"/>
    <property type="match status" value="2"/>
</dbReference>
<accession>Q49XM5</accession>
<keyword id="KW-0324">Glycolysis</keyword>
<keyword id="KW-0560">Oxidoreductase</keyword>
<keyword id="KW-1185">Reference proteome</keyword>
<keyword id="KW-0786">Thiamine pyrophosphate</keyword>
<organism>
    <name type="scientific">Staphylococcus saprophyticus subsp. saprophyticus (strain ATCC 15305 / DSM 20229 / NCIMB 8711 / NCTC 7292 / S-41)</name>
    <dbReference type="NCBI Taxonomy" id="342451"/>
    <lineage>
        <taxon>Bacteria</taxon>
        <taxon>Bacillati</taxon>
        <taxon>Bacillota</taxon>
        <taxon>Bacilli</taxon>
        <taxon>Bacillales</taxon>
        <taxon>Staphylococcaceae</taxon>
        <taxon>Staphylococcus</taxon>
    </lineage>
</organism>
<evidence type="ECO:0000255" key="1">
    <source>
        <dbReference type="HAMAP-Rule" id="MF_01169"/>
    </source>
</evidence>
<feature type="chain" id="PRO_0000162185" description="2-oxoglutarate dehydrogenase E1 component">
    <location>
        <begin position="1"/>
        <end position="933"/>
    </location>
</feature>
<name>ODO1_STAS1</name>
<proteinExistence type="inferred from homology"/>
<comment type="function">
    <text evidence="1">E1 component of the 2-oxoglutarate dehydrogenase (OGDH) complex which catalyzes the decarboxylation of 2-oxoglutarate, the first step in the conversion of 2-oxoglutarate to succinyl-CoA and CO(2).</text>
</comment>
<comment type="catalytic activity">
    <reaction evidence="1">
        <text>N(6)-[(R)-lipoyl]-L-lysyl-[protein] + 2-oxoglutarate + H(+) = N(6)-[(R)-S(8)-succinyldihydrolipoyl]-L-lysyl-[protein] + CO2</text>
        <dbReference type="Rhea" id="RHEA:12188"/>
        <dbReference type="Rhea" id="RHEA-COMP:10474"/>
        <dbReference type="Rhea" id="RHEA-COMP:20092"/>
        <dbReference type="ChEBI" id="CHEBI:15378"/>
        <dbReference type="ChEBI" id="CHEBI:16526"/>
        <dbReference type="ChEBI" id="CHEBI:16810"/>
        <dbReference type="ChEBI" id="CHEBI:83099"/>
        <dbReference type="ChEBI" id="CHEBI:83120"/>
        <dbReference type="EC" id="1.2.4.2"/>
    </reaction>
</comment>
<comment type="cofactor">
    <cofactor evidence="1">
        <name>thiamine diphosphate</name>
        <dbReference type="ChEBI" id="CHEBI:58937"/>
    </cofactor>
</comment>
<comment type="subunit">
    <text evidence="1">Homodimer. Part of the 2-oxoglutarate dehydrogenase (OGDH) complex composed of E1 (2-oxoglutarate dehydrogenase), E2 (dihydrolipoamide succinyltransferase) and E3 (dihydrolipoamide dehydrogenase); the complex contains multiple copies of the three enzymatic components (E1, E2 and E3).</text>
</comment>
<comment type="similarity">
    <text evidence="1">Belongs to the alpha-ketoglutarate dehydrogenase family.</text>
</comment>
<sequence length="933" mass="105479">MSNESQVSEAPVNFGANLGYVLDLYDIYLDNPSAVPEDLQVLFSTIKNGEANIATNTEGQSNVTKGDSTIKRVMRLIDNIRQYGHLLADIYPVNRPQRENVPKLNMEDFNLDQETLESISAGIVSEHFKDIYDNAYEAIVRMEKRYKGPIAFEYTHINNNRERVWLKRRIETPYKATLNDNQKIELFKNLAHVEGFEKYLHKNFVGAKRFSIEGVDTLVPMLQQTLRIASDEGIQNIQIGMAHRGRLNVLTHVLEKPYEMMISEFMHIDPMKFLPEDGSLQLTSGWTGDVKYHLGGVKTTQSYGSEQRISLANNPSHLEIVAPVVLGKTRANQDTTDKPGAVTTEFKKSMPILIHGDAAYPGQGINFEAMNLGNLEGYSTGGSLHIITNNRIGFTTEPEDGRSTTYSSDVAKGYDVPIMHVNADNVEATIEAIEIAMAFRKEFNKDVVIDLVGYRRYGHNEMDEPSITNPLQYYEIRKHESVDILYGKQLVNENIISENQMNQIFDDVQNTLRAAHDKIDKNDKMDNPDMQKPDSLAEPIQTKDEEVSYEQLKEINDAMLSYPSDFNVLKKLNKVLEKRREPFESEDGLVDWAQAEQLAFATITQNGRPIRLTGQDSERGTFSHRHAVLHDPDTGAQYVPLHNVPDQKATFEVRNSPLSEAAVVGFEYGYNIQNKSCMTIWEAQYGDFSNMAQMIFDNFLFSSRAKWGERSGLTLFLPHSFEGQGPEHSSARLERFLQLAGENNSTIVNLSSSSNYFHLLRAQAANLGTQSMRPLVVMSPKSLLRNKTVADPISKFTSGKFEPILPEAHDKASVKKVILASGKMFIDLKEYLTKNPNKSILLVAVERLYPFPADEIDALLSELPNLEHVAWVQEEPKNQGAWSFVYPYLKELTTDKYDLSYHGRIQRSAPAEGDGEIHKLVQNMIIEQSTNIN</sequence>
<gene>
    <name evidence="1" type="primary">odhA</name>
    <name type="ordered locus">SSP1325</name>
</gene>